<dbReference type="EC" id="7.1.1.2"/>
<dbReference type="EMBL" id="U28366">
    <property type="protein sequence ID" value="AAB05095.1"/>
    <property type="molecule type" value="Genomic_DNA"/>
</dbReference>
<dbReference type="EMBL" id="D84148">
    <property type="protein sequence ID" value="BAA20159.1"/>
    <property type="molecule type" value="Genomic_DNA"/>
</dbReference>
<dbReference type="EMBL" id="U12143">
    <property type="protein sequence ID" value="AAD04740.1"/>
    <property type="molecule type" value="Genomic_DNA"/>
</dbReference>
<dbReference type="EMBL" id="AF133701">
    <property type="protein sequence ID" value="AAF61385.1"/>
    <property type="molecule type" value="Genomic_DNA"/>
</dbReference>
<dbReference type="PIR" id="T09954">
    <property type="entry name" value="T09954"/>
</dbReference>
<dbReference type="RefSeq" id="NP_008452.1">
    <property type="nucleotide sequence ID" value="NC_001960.1"/>
</dbReference>
<dbReference type="SMR" id="Q35929"/>
<dbReference type="STRING" id="8030.ENSSSAP00000000009"/>
<dbReference type="PaxDb" id="8030-ENSSSAP00000000009"/>
<dbReference type="GeneID" id="808308"/>
<dbReference type="KEGG" id="sasa:808308"/>
<dbReference type="CTD" id="4537"/>
<dbReference type="Proteomes" id="UP000087266">
    <property type="component" value="Mitochondrion MT"/>
</dbReference>
<dbReference type="Bgee" id="ENSSSAG00000000026">
    <property type="expression patterns" value="Expressed in mesonephros and 25 other cell types or tissues"/>
</dbReference>
<dbReference type="GO" id="GO:0031966">
    <property type="term" value="C:mitochondrial membrane"/>
    <property type="evidence" value="ECO:0007669"/>
    <property type="project" value="UniProtKB-SubCell"/>
</dbReference>
<dbReference type="GO" id="GO:0030964">
    <property type="term" value="C:NADH dehydrogenase complex"/>
    <property type="evidence" value="ECO:0007669"/>
    <property type="project" value="TreeGrafter"/>
</dbReference>
<dbReference type="GO" id="GO:0008137">
    <property type="term" value="F:NADH dehydrogenase (ubiquinone) activity"/>
    <property type="evidence" value="ECO:0007669"/>
    <property type="project" value="UniProtKB-EC"/>
</dbReference>
<dbReference type="FunFam" id="1.20.58.1610:FF:000004">
    <property type="entry name" value="NADH-quinone oxidoreductase subunit A"/>
    <property type="match status" value="1"/>
</dbReference>
<dbReference type="Gene3D" id="1.20.58.1610">
    <property type="entry name" value="NADH:ubiquinone/plastoquinone oxidoreductase, chain 3"/>
    <property type="match status" value="1"/>
</dbReference>
<dbReference type="InterPro" id="IPR000440">
    <property type="entry name" value="NADH_UbQ/plastoQ_OxRdtase_su3"/>
</dbReference>
<dbReference type="InterPro" id="IPR038430">
    <property type="entry name" value="NDAH_ubi_oxred_su3_sf"/>
</dbReference>
<dbReference type="PANTHER" id="PTHR11058">
    <property type="entry name" value="NADH-UBIQUINONE OXIDOREDUCTASE CHAIN 3"/>
    <property type="match status" value="1"/>
</dbReference>
<dbReference type="PANTHER" id="PTHR11058:SF9">
    <property type="entry name" value="NADH-UBIQUINONE OXIDOREDUCTASE CHAIN 3"/>
    <property type="match status" value="1"/>
</dbReference>
<dbReference type="Pfam" id="PF00507">
    <property type="entry name" value="Oxidored_q4"/>
    <property type="match status" value="1"/>
</dbReference>
<organism>
    <name type="scientific">Salmo salar</name>
    <name type="common">Atlantic salmon</name>
    <dbReference type="NCBI Taxonomy" id="8030"/>
    <lineage>
        <taxon>Eukaryota</taxon>
        <taxon>Metazoa</taxon>
        <taxon>Chordata</taxon>
        <taxon>Craniata</taxon>
        <taxon>Vertebrata</taxon>
        <taxon>Euteleostomi</taxon>
        <taxon>Actinopterygii</taxon>
        <taxon>Neopterygii</taxon>
        <taxon>Teleostei</taxon>
        <taxon>Protacanthopterygii</taxon>
        <taxon>Salmoniformes</taxon>
        <taxon>Salmonidae</taxon>
        <taxon>Salmoninae</taxon>
        <taxon>Salmo</taxon>
    </lineage>
</organism>
<comment type="function">
    <text evidence="1">Core subunit of the mitochondrial membrane respiratory chain NADH dehydrogenase (Complex I) that is believed to belong to the minimal assembly required for catalysis. Complex I functions in the transfer of electrons from NADH to the respiratory chain. The immediate electron acceptor for the enzyme is believed to be ubiquinone (By similarity).</text>
</comment>
<comment type="catalytic activity">
    <reaction>
        <text>a ubiquinone + NADH + 5 H(+)(in) = a ubiquinol + NAD(+) + 4 H(+)(out)</text>
        <dbReference type="Rhea" id="RHEA:29091"/>
        <dbReference type="Rhea" id="RHEA-COMP:9565"/>
        <dbReference type="Rhea" id="RHEA-COMP:9566"/>
        <dbReference type="ChEBI" id="CHEBI:15378"/>
        <dbReference type="ChEBI" id="CHEBI:16389"/>
        <dbReference type="ChEBI" id="CHEBI:17976"/>
        <dbReference type="ChEBI" id="CHEBI:57540"/>
        <dbReference type="ChEBI" id="CHEBI:57945"/>
        <dbReference type="EC" id="7.1.1.2"/>
    </reaction>
</comment>
<comment type="subcellular location">
    <subcellularLocation>
        <location evidence="1">Mitochondrion membrane</location>
        <topology evidence="1">Multi-pass membrane protein</topology>
    </subcellularLocation>
</comment>
<comment type="similarity">
    <text evidence="3">Belongs to the complex I subunit 3 family.</text>
</comment>
<evidence type="ECO:0000250" key="1"/>
<evidence type="ECO:0000255" key="2"/>
<evidence type="ECO:0000305" key="3"/>
<accession>Q35929</accession>
<accession>O03381</accession>
<reference key="1">
    <citation type="submission" date="1996-07" db="EMBL/GenBank/DDBJ databases">
        <authorList>
            <person name="McKay S.J."/>
            <person name="Devlin R.H."/>
            <person name="Smith M.J."/>
        </authorList>
    </citation>
    <scope>NUCLEOTIDE SEQUENCE [GENOMIC DNA]</scope>
    <source>
        <tissue>Liver</tissue>
    </source>
</reference>
<reference key="2">
    <citation type="journal article" date="1997" name="Mol. Phylogenet. Evol.">
        <title>Mitochondrial DNA sequence analysis of the masu salmon -- phylogeny in the genus Oncorhynchus.</title>
        <authorList>
            <person name="Oohara I."/>
            <person name="Sawano K."/>
            <person name="Okazaki T."/>
        </authorList>
    </citation>
    <scope>NUCLEOTIDE SEQUENCE [GENOMIC DNA]</scope>
</reference>
<reference key="3">
    <citation type="journal article" date="1999" name="Gene">
        <title>The complete mitochondrial DNA sequence of the Atlantic salmon, Salmo salar.</title>
        <authorList>
            <person name="Hurst C.D."/>
            <person name="Bartlett S.E."/>
            <person name="Davidson W.S."/>
            <person name="Bruce I.J."/>
        </authorList>
    </citation>
    <scope>NUCLEOTIDE SEQUENCE [GENOMIC DNA]</scope>
    <source>
        <tissue>Liver</tissue>
    </source>
</reference>
<reference key="4">
    <citation type="submission" date="1999-03" db="EMBL/GenBank/DDBJ databases">
        <title>The complete mitochondrial genome sequence of a teleost, Salmo salar, and comparisons with other salmoniformes.</title>
        <authorList>
            <person name="Arnason U."/>
            <person name="Johnsson E."/>
            <person name="Rasmussen A.S."/>
        </authorList>
    </citation>
    <scope>NUCLEOTIDE SEQUENCE [GENOMIC DNA]</scope>
</reference>
<proteinExistence type="inferred from homology"/>
<protein>
    <recommendedName>
        <fullName>NADH-ubiquinone oxidoreductase chain 3</fullName>
        <ecNumber>7.1.1.2</ecNumber>
    </recommendedName>
    <alternativeName>
        <fullName>NADH dehydrogenase subunit 3</fullName>
    </alternativeName>
</protein>
<sequence length="116" mass="12795">MNLITTIIAITITLSAVLATISFWLPQMTPDAEKLSPYECGFDPLGSARLPFSLRFFLIAILFLLFDLEIALLLPLPWGDQLTTPALTLAWSAAVLALLTLGLIYEWTQGGLEWAE</sequence>
<gene>
    <name type="primary">MT-ND3</name>
    <name type="synonym">MTND3</name>
    <name type="synonym">NADH3</name>
    <name type="synonym">ND3</name>
</gene>
<geneLocation type="mitochondrion"/>
<keyword id="KW-0249">Electron transport</keyword>
<keyword id="KW-0472">Membrane</keyword>
<keyword id="KW-0496">Mitochondrion</keyword>
<keyword id="KW-0520">NAD</keyword>
<keyword id="KW-1185">Reference proteome</keyword>
<keyword id="KW-0679">Respiratory chain</keyword>
<keyword id="KW-1278">Translocase</keyword>
<keyword id="KW-0812">Transmembrane</keyword>
<keyword id="KW-1133">Transmembrane helix</keyword>
<keyword id="KW-0813">Transport</keyword>
<keyword id="KW-0830">Ubiquinone</keyword>
<name>NU3M_SALSA</name>
<feature type="chain" id="PRO_0000117826" description="NADH-ubiquinone oxidoreductase chain 3">
    <location>
        <begin position="1"/>
        <end position="116"/>
    </location>
</feature>
<feature type="transmembrane region" description="Helical" evidence="2">
    <location>
        <begin position="3"/>
        <end position="23"/>
    </location>
</feature>
<feature type="transmembrane region" description="Helical" evidence="2">
    <location>
        <begin position="56"/>
        <end position="76"/>
    </location>
</feature>
<feature type="transmembrane region" description="Helical" evidence="2">
    <location>
        <begin position="85"/>
        <end position="105"/>
    </location>
</feature>
<feature type="sequence conflict" description="In Ref. 1; AAB05095." evidence="3" ref="1">
    <original>T</original>
    <variation>M</variation>
    <location>
        <position position="6"/>
    </location>
</feature>